<feature type="peptide" id="PRO_0000044988" description="Omega-hexatoxin-Hv1a" evidence="13">
    <location>
        <begin position="1"/>
        <end position="37"/>
    </location>
</feature>
<feature type="site" description="Critical for insecticidal activity" evidence="19">
    <location>
        <position position="10"/>
    </location>
</feature>
<feature type="site" description="Critical for insecticidal activity" evidence="19">
    <location>
        <position position="27"/>
    </location>
</feature>
<feature type="site" description="Critical for insecticidal activity" evidence="19">
    <location>
        <position position="35"/>
    </location>
</feature>
<feature type="disulfide bond" evidence="2 13 21 22">
    <location>
        <begin position="4"/>
        <end position="18"/>
    </location>
</feature>
<feature type="disulfide bond" evidence="2 13 21 22">
    <location>
        <begin position="11"/>
        <end position="22"/>
    </location>
</feature>
<feature type="disulfide bond" evidence="2 13 21 22">
    <location>
        <begin position="17"/>
        <end position="36"/>
    </location>
</feature>
<feature type="mutagenesis site" description="4-fold decrease in toxicity to crickets, and insignificant decrease to flies. 16-fold decrease in binding affinity to cockroach membranes." evidence="4">
    <original>Q</original>
    <variation>A</variation>
    <location>
        <position position="9"/>
    </location>
</feature>
<feature type="mutagenesis site" description="6-fold decrease in toxicity to crickets and 15-fold to flies. 190-fold decrease in binding affinity to cockroach membranes." evidence="4">
    <original>P</original>
    <variation>A</variation>
    <location>
        <position position="10"/>
    </location>
</feature>
<feature type="mutagenesis site" description="16-fold decrease in binding affinity to cockroach membranes.">
    <original>Y</original>
    <variation>A</variation>
    <location>
        <position position="13"/>
    </location>
</feature>
<feature type="mutagenesis site" description="14-fold decrease in toxicity to crickets and 30-fold to flies. Abolishes toxicity to crickets and flies; when associated with A-35. 195-fold decrease in binding affinity to cockroach membranes." evidence="2 4">
    <original>N</original>
    <variation>A</variation>
    <location>
        <position position="27"/>
    </location>
</feature>
<feature type="mutagenesis site" description="12-fold decrease in toxicity to crickets." evidence="2 4">
    <original>N</original>
    <variation>D</variation>
    <location>
        <position position="27"/>
    </location>
</feature>
<feature type="mutagenesis site" description="4.4-fold decrease in toxicity to crickets, and 15 to flies. Abolishes toxicity to crickets and flies; when associated with A-27. 280-fold decrease in binding affinity to cockroach membranes." evidence="2 4">
    <original>R</original>
    <variation>A</variation>
    <location>
        <position position="35"/>
    </location>
</feature>
<feature type="mutagenesis site" description="7.8-fold decrease in toxicity to crickets." evidence="2 4">
    <original>R</original>
    <variation>E</variation>
    <location>
        <position position="35"/>
    </location>
</feature>
<feature type="helix" evidence="23">
    <location>
        <begin position="14"/>
        <end position="16"/>
    </location>
</feature>
<feature type="strand" evidence="23">
    <location>
        <begin position="17"/>
        <end position="20"/>
    </location>
</feature>
<feature type="strand" evidence="23">
    <location>
        <begin position="22"/>
        <end position="26"/>
    </location>
</feature>
<feature type="strand" evidence="23">
    <location>
        <begin position="28"/>
        <end position="30"/>
    </location>
</feature>
<feature type="strand" evidence="23">
    <location>
        <begin position="32"/>
        <end position="36"/>
    </location>
</feature>
<sequence length="37" mass="4055">SPTCIPSGQPCPYNENCCSQSCTFKENENGNTVKRCD</sequence>
<proteinExistence type="evidence at protein level"/>
<name>TO1A_HADVE</name>
<dbReference type="PDB" id="1AXH">
    <property type="method" value="NMR"/>
    <property type="chains" value="A=1-37"/>
</dbReference>
<dbReference type="PDB" id="1HVW">
    <property type="method" value="NMR"/>
    <property type="chains" value="A=4-23"/>
</dbReference>
<dbReference type="PDBsum" id="1AXH"/>
<dbReference type="PDBsum" id="1HVW"/>
<dbReference type="BMRB" id="P56207"/>
<dbReference type="SMR" id="P56207"/>
<dbReference type="ArachnoServer" id="AS000193">
    <property type="toxin name" value="omega-hexatoxin-Hv1a"/>
</dbReference>
<dbReference type="EvolutionaryTrace" id="P56207"/>
<dbReference type="GO" id="GO:0005576">
    <property type="term" value="C:extracellular region"/>
    <property type="evidence" value="ECO:0007669"/>
    <property type="project" value="UniProtKB-SubCell"/>
</dbReference>
<dbReference type="GO" id="GO:0019855">
    <property type="term" value="F:calcium channel inhibitor activity"/>
    <property type="evidence" value="ECO:0000314"/>
    <property type="project" value="CACAO"/>
</dbReference>
<dbReference type="GO" id="GO:0090729">
    <property type="term" value="F:toxin activity"/>
    <property type="evidence" value="ECO:0007669"/>
    <property type="project" value="UniProtKB-KW"/>
</dbReference>
<dbReference type="GO" id="GO:0006952">
    <property type="term" value="P:defense response"/>
    <property type="evidence" value="ECO:0007669"/>
    <property type="project" value="InterPro"/>
</dbReference>
<dbReference type="InterPro" id="IPR009415">
    <property type="entry name" value="Omega-atracotox"/>
</dbReference>
<dbReference type="InterPro" id="IPR018071">
    <property type="entry name" value="Omega-atracotox_CS"/>
</dbReference>
<dbReference type="Pfam" id="PF06357">
    <property type="entry name" value="Omega-toxin"/>
    <property type="match status" value="1"/>
</dbReference>
<dbReference type="SUPFAM" id="SSF57059">
    <property type="entry name" value="omega toxin-like"/>
    <property type="match status" value="1"/>
</dbReference>
<dbReference type="PROSITE" id="PS60016">
    <property type="entry name" value="OMEGA_ACTX_1"/>
    <property type="match status" value="1"/>
</dbReference>
<comment type="function">
    <text evidence="3 4 5 7 8 13">Reversibly and voltage-independently blocks both mid-low- (M-LVA) and high-voltage-activated (HVA) calcium channels in cockroach DUM neurons (PubMed:17610847). Is lethal to many insect species but not toxic to mammals (PubMed:16779650, PubMed:9228949). May target the insect high-voltage-activated calcium channel Dmca1D. Also inhibits acarines calcium channels. An extremely high toxin concentration partially inhibits Cav1.2/CACNA1C, Cav2.1/CACNA1A and Cav2.2/CACNA1B calcium channel of rats. As for omega-AcTx-Hv2a, the phenotypic effect of injection of this toxin into lone star ticks (Amblyomma americanum) is curling of all eight legs into closed loops.</text>
</comment>
<comment type="subcellular location">
    <subcellularLocation>
        <location evidence="13">Secreted</location>
    </subcellularLocation>
</comment>
<comment type="tissue specificity">
    <text evidence="20">Expressed by the venom gland.</text>
</comment>
<comment type="domain">
    <text evidence="2 13">The presence of a 'disulfide through disulfide knot' structurally defines this protein as a knottin.</text>
</comment>
<comment type="toxic dose">
    <text evidence="20">PD(50) is 3 umol/kg in tobacco budworms (Heliothis armigera).</text>
</comment>
<comment type="toxic dose">
    <text evidence="20">PD(50) is 0.25 umol/kg in tobacco budworms (Heliothis virescens).</text>
</comment>
<comment type="toxic dose">
    <text evidence="1">LD(50) is 89-91 pmol/g (0.38 mg/kg) to house crickets (Acheta domesticus).</text>
</comment>
<comment type="toxic dose">
    <text evidence="1">LD(50) is 86.5 pmol/g in house flies (Musca domestica).</text>
</comment>
<comment type="toxic dose">
    <text>LD(50) is 716 +-23 pmol/g (3.00 +-0.10 ug/g) when orally administered into lone star ticks (Amblyomma americanum).</text>
</comment>
<comment type="toxic dose">
    <text>LD(50) is 447 +-3 pmol/g (1877 +-0.013 ug/g) when injected into lone star ticks (Amblyomma americanum).</text>
</comment>
<comment type="toxic dose">
    <text evidence="12">LD(50) is 147 nmol/g in triatomine bug (Rhodinius prolixus).</text>
</comment>
<comment type="toxic dose">
    <text evidence="13">PD(50) is 0.32 umol/kg in Periplaneta americana.</text>
</comment>
<comment type="biotechnology">
    <text evidence="14">Spear and Spear T (Vesparon) are biological insecticides containing 20% of the active ingredient GS-omega/kappa-Hxtx-Hv1a. They are effective against thrips, whiteflies, and spider mites in greenhouse settings. They have a large molecular weight, are hydrophilic, and have many hydrogen donors. They kill some insects on contact. The peptides block two ion channels in the insect nervous system (a voltage-gated calcium channel (Cav) and a calcium-activated potassium channel (KCa)).</text>
</comment>
<comment type="biotechnology">
    <text evidence="9 11">Could be considered as a biological insecticide candidate, when fused to Galanthus nivalis agglutinin (GNA), a protein with the potential to cross the insect gut (PubMed:22761779). This chimeric Hv1a/GNA variant shows a gain in toxicity on insects when administered orally (tested on Mamestra brassicae), while maintaining similar effects as the wild-type toxin when injected (PubMed:22761779). Transport of fusion protein from gut contents to the hemolymph of insect larvae, and binding to the nerve cord indicate that the fusion with GNA permits to deliver the toxin to sites of action within the insect central nervous system (PubMed:22761779). The Hv1a/GNA variant does not show adverse effects on honeybees (PubMed:22761779, PubMed:24898372).</text>
</comment>
<comment type="biotechnology">
    <text evidence="9">Potential biopesticide that could protect honeybees from the parasitic small hive beetle pest Aethina tumida, but is harmless to honeybees. Is orally toxic to A.tumida, when fused to Galanthus nivalis agglutinin (GNA), a protein with the potential to cross the insect gut.</text>
</comment>
<comment type="biotechnology">
    <text evidence="10">Could be considered as a biological insecticide candidate, when fused to a luteovirus coat protein, which is able for delivery of fused proteins into the hemocoel of pea aphids. This luteovirus coat protein is used as a carrier to greatly enhance the oral toxicity of Hv1a to a range of aphid pest species (Acyrthosiphon pisum, Rhopalosiphum padi, Aphis glycines and Myzus persicae).</text>
</comment>
<comment type="miscellaneous">
    <text evidence="6">When expressed in tobacco plants, the toxin induces a 100% mortality of insect larvae H.armigera and S.littoralis after ingestion.</text>
</comment>
<comment type="similarity">
    <text evidence="18">Belongs to the neurotoxin 08 (Shiva) family. 01 (omega toxin) subfamily.</text>
</comment>
<comment type="online information" name="Chemical and engineering news">
    <link uri="https://cen.acs.org/articles/95/i11/Spider-venom-insecticide-whose-time.html"/>
</comment>
<keyword id="KW-0002">3D-structure</keyword>
<keyword id="KW-0108">Calcium channel impairing toxin</keyword>
<keyword id="KW-0903">Direct protein sequencing</keyword>
<keyword id="KW-1015">Disulfide bond</keyword>
<keyword id="KW-0872">Ion channel impairing toxin</keyword>
<keyword id="KW-0960">Knottin</keyword>
<keyword id="KW-0528">Neurotoxin</keyword>
<keyword id="KW-0964">Secreted</keyword>
<keyword id="KW-0800">Toxin</keyword>
<keyword id="KW-1218">Voltage-gated calcium channel impairing toxin</keyword>
<organism>
    <name type="scientific">Hadronyche versuta</name>
    <name type="common">Blue mountains funnel-web spider</name>
    <name type="synonym">Atrax versutus</name>
    <dbReference type="NCBI Taxonomy" id="6904"/>
    <lineage>
        <taxon>Eukaryota</taxon>
        <taxon>Metazoa</taxon>
        <taxon>Ecdysozoa</taxon>
        <taxon>Arthropoda</taxon>
        <taxon>Chelicerata</taxon>
        <taxon>Arachnida</taxon>
        <taxon>Araneae</taxon>
        <taxon>Mygalomorphae</taxon>
        <taxon>Hexathelidae</taxon>
        <taxon>Hadronyche</taxon>
    </lineage>
</organism>
<reference key="1">
    <citation type="journal article" date="1997" name="Nat. Struct. Biol.">
        <title>The structure of a novel insecticidal neurotoxin, omega-atracotoxin-HV1, from the venom of an Australian funnel web spider.</title>
        <authorList>
            <person name="Fletcher J.I."/>
            <person name="Smith R."/>
            <person name="O'Donoghue S.I."/>
            <person name="Nilges M."/>
            <person name="Connor M."/>
            <person name="Howden M.E.H."/>
            <person name="Christie M.J."/>
            <person name="King G.F."/>
        </authorList>
    </citation>
    <scope>PROTEIN SEQUENCE</scope>
    <scope>SYNTHESIS</scope>
    <scope>TOXIC DOSE</scope>
    <scope>STRUCTURE BY NMR</scope>
    <scope>SUBCELLULAR LOCATION</scope>
    <source>
        <tissue>Venom</tissue>
    </source>
</reference>
<reference key="2">
    <citation type="journal article" date="1999" name="Eur. J. Biochem.">
        <title>Structure-function studies of omega-atracotoxin, a potent antagonist of insect voltage-gated calcium channels.</title>
        <authorList>
            <person name="Wang X.-H."/>
            <person name="Smith R."/>
            <person name="Fletcher J.I."/>
            <person name="Wilson H."/>
            <person name="Wood C.J."/>
            <person name="Merlin E.H."/>
            <person name="King G.F."/>
        </authorList>
    </citation>
    <scope>TOXIC DOSE</scope>
    <source>
        <tissue>Venom</tissue>
    </source>
</reference>
<reference key="3">
    <citation type="journal article" date="2003" name="Invertebr. Neurosci.">
        <title>Mode of action of atracotoxin at central and peripheral synapses of insects.</title>
        <authorList>
            <person name="Bloomquist J.R."/>
        </authorList>
    </citation>
    <scope>FUNCTION</scope>
</reference>
<reference key="4">
    <citation type="journal article" date="2004" name="J. Biol. Chem.">
        <title>Scanning mutagenesis of omega-atracotoxin-Hv1a reveals a spatially restricted epitope that confers selective activity against insect calcium channels.</title>
        <authorList>
            <person name="Tedford H.W."/>
            <person name="Gilles N."/>
            <person name="Menez A."/>
            <person name="Doering C.J."/>
            <person name="Zamponi G.W."/>
            <person name="King G.F."/>
        </authorList>
    </citation>
    <scope>FUNCTION</scope>
    <scope>TOXIC DOSE</scope>
    <scope>MUTAGENESIS OF GLN-9; PRO-10; ASN-27 AND ARG-35</scope>
</reference>
<reference key="5">
    <citation type="journal article" date="2006" name="Toxicon">
        <title>Orally active acaricidal peptide toxins from spider venom.</title>
        <authorList>
            <person name="Mukherjee A.K."/>
            <person name="Sollod B.L."/>
            <person name="Wikel S.K."/>
            <person name="King G.F."/>
        </authorList>
    </citation>
    <scope>FUNCTION</scope>
    <scope>TOXIC DOSE</scope>
</reference>
<reference key="6">
    <citation type="journal article" date="2006" name="Transgenic Res.">
        <title>Spider venom toxin protects plants from insect attack.</title>
        <authorList>
            <person name="Khan S.A."/>
            <person name="Zafar Y."/>
            <person name="Briddon R.W."/>
            <person name="Malik K.A."/>
            <person name="Mukhtar Z."/>
        </authorList>
    </citation>
    <scope>TRANSGENIC PROTECTION OF PLANTS</scope>
</reference>
<reference key="7">
    <citation type="journal article" date="2007" name="Biochem. Pharmacol.">
        <title>The omega-atracotoxins: selective blockers of insect M-LVA and HVA calcium channels.</title>
        <authorList>
            <person name="Chong Y."/>
            <person name="Hayes J.L."/>
            <person name="Sollod B."/>
            <person name="Wen S."/>
            <person name="Wilson D.T."/>
            <person name="Hains P.G."/>
            <person name="Hodgson W.C."/>
            <person name="Broady K.W."/>
            <person name="King G.F."/>
            <person name="Nicholson G.M."/>
        </authorList>
    </citation>
    <scope>FUNCTION</scope>
    <source>
        <strain>XenFW194</strain>
        <tissue>Venom</tissue>
        <tissue>Venom gland</tissue>
    </source>
</reference>
<reference key="8">
    <citation type="journal article" date="2007" name="Peptides">
        <title>A model genetic system for testing the in vivo function of peptide toxins.</title>
        <authorList>
            <person name="Tedford H.W."/>
            <person name="Maggio F."/>
            <person name="Reenan R.A."/>
            <person name="King G."/>
        </authorList>
    </citation>
    <scope>FUNCTION</scope>
</reference>
<reference key="9">
    <citation type="journal article" date="2012" name="PLoS ONE">
        <title>Fusion to snowdrop lectin magnifies the oral activity of insecticidal omega-Hexatoxin-Hv1a peptide by enabling its delivery to the central nervous system.</title>
        <authorList>
            <person name="Fitches E.C."/>
            <person name="Pyati P."/>
            <person name="King G.F."/>
            <person name="Gatehouse J.A."/>
        </authorList>
    </citation>
    <scope>BIOTECHNOLOGY</scope>
    <scope>RECOMBINANT EXPRESSION AS A CHIMERIC VARIANT</scope>
</reference>
<reference key="10">
    <citation type="journal article" date="2014" name="Nat. Biotechnol.">
        <title>Toxin delivery by the coat protein of an aphid-vectored plant virus provides plant resistance to aphids.</title>
        <authorList>
            <person name="Bonning B.C."/>
            <person name="Pal N."/>
            <person name="Liu S."/>
            <person name="Wang Z."/>
            <person name="Sivakumar S."/>
            <person name="Dixon P.M."/>
            <person name="King G.F."/>
            <person name="Miller W.A."/>
        </authorList>
    </citation>
    <scope>BIOTECHNOLOGY</scope>
    <scope>RECOMBINANT EXPRESSION AS A CHIMERIC VARIANT</scope>
</reference>
<reference key="11">
    <citation type="journal article" date="2014" name="Proc. R. Soc. B">
        <title>Novel biopesticide based on a spider venom peptide shows no adverse effects on honeybees.</title>
        <authorList>
            <person name="Nakasu E.Y."/>
            <person name="Williamson S.M."/>
            <person name="Edwards M.G."/>
            <person name="Fitches E.C."/>
            <person name="Gatehouse J.A."/>
            <person name="Wright G.A."/>
            <person name="Gatehouse A.M."/>
        </authorList>
    </citation>
    <scope>BIOTECHNOLOGY</scope>
    <scope>RECOMBINANT EXPRESSION AS A CHIMERIC VARIANT</scope>
</reference>
<reference key="12">
    <citation type="journal article" date="2016" name="Sci. Rep.">
        <title>Molecular basis of the remarkable species selectivity of an insecticidal sodium channel toxin from the African spider Augacephalus ezendami.</title>
        <authorList>
            <person name="Herzig V."/>
            <person name="Ikonomopoulou M."/>
            <person name="Smith J.J."/>
            <person name="Dziemborowicz S."/>
            <person name="Gilchrist J."/>
            <person name="Kuhn-Nentwig L."/>
            <person name="Rezende F.O."/>
            <person name="Moreira L.A."/>
            <person name="Nicholson G.M."/>
            <person name="Bosmans F."/>
            <person name="King G.F."/>
        </authorList>
    </citation>
    <scope>TOXIC DOSE</scope>
</reference>
<reference key="13">
    <citation type="journal article" date="2018" name="J. Pest Sci.">
        <title>Assessment of a commercial spider venom peptide against spotted-wing Drosophila and interaction with adjuvants.</title>
        <authorList>
            <person name="Fanning P.D."/>
            <person name="VanWoerkom A."/>
            <person name="Wise J.C."/>
            <person name="Isaacs R."/>
        </authorList>
    </citation>
    <scope>BIOTECHNOLOGY</scope>
</reference>
<reference key="14">
    <citation type="journal article" date="2020" name="J. Pest Sci.">
        <title>Demonstrating the potential of a novel spider venom-based biopesticide for target-specific control of the small hive beetle, a serious pest of the European honeybee.</title>
        <authorList>
            <person name="Powell M.E."/>
            <person name="Bradish H.M."/>
            <person name="Cao M."/>
            <person name="Makinson R."/>
            <person name="Brown A.P."/>
            <person name="Gatehouse J.A."/>
            <person name="Fitches E.C."/>
        </authorList>
    </citation>
    <scope>BIOTECHNOLOGY</scope>
</reference>
<reference key="15">
    <citation type="journal article" date="2001" name="J. Biol. Chem.">
        <title>Functional significance of the beta hairpin in the insecticidal neurotoxin omega-atracotoxin-Hv1a.</title>
        <authorList>
            <person name="Tedford H.W."/>
            <person name="Fletcher J.I."/>
            <person name="King G.F."/>
        </authorList>
    </citation>
    <scope>STRUCTURE BY NMR OF 4-23</scope>
    <scope>TOXIC DOSE</scope>
    <scope>MUTAGENESIS OF ASN-27 AND ARG-35</scope>
</reference>
<evidence type="ECO:0000269" key="1">
    <source>
    </source>
</evidence>
<evidence type="ECO:0000269" key="2">
    <source>
    </source>
</evidence>
<evidence type="ECO:0000269" key="3">
    <source>
    </source>
</evidence>
<evidence type="ECO:0000269" key="4">
    <source>
    </source>
</evidence>
<evidence type="ECO:0000269" key="5">
    <source>
    </source>
</evidence>
<evidence type="ECO:0000269" key="6">
    <source>
    </source>
</evidence>
<evidence type="ECO:0000269" key="7">
    <source>
    </source>
</evidence>
<evidence type="ECO:0000269" key="8">
    <source>
    </source>
</evidence>
<evidence type="ECO:0000269" key="9">
    <source>
    </source>
</evidence>
<evidence type="ECO:0000269" key="10">
    <source>
    </source>
</evidence>
<evidence type="ECO:0000269" key="11">
    <source>
    </source>
</evidence>
<evidence type="ECO:0000269" key="12">
    <source>
    </source>
</evidence>
<evidence type="ECO:0000269" key="13">
    <source>
    </source>
</evidence>
<evidence type="ECO:0000269" key="14">
    <source ref="13"/>
</evidence>
<evidence type="ECO:0000303" key="15">
    <source>
    </source>
</evidence>
<evidence type="ECO:0000303" key="16">
    <source>
    </source>
</evidence>
<evidence type="ECO:0000303" key="17">
    <source ref="13"/>
</evidence>
<evidence type="ECO:0000305" key="18"/>
<evidence type="ECO:0000305" key="19">
    <source>
    </source>
</evidence>
<evidence type="ECO:0000305" key="20">
    <source>
    </source>
</evidence>
<evidence type="ECO:0000312" key="21">
    <source>
        <dbReference type="PDB" id="1AXH"/>
    </source>
</evidence>
<evidence type="ECO:0000312" key="22">
    <source>
        <dbReference type="PDB" id="1HVW"/>
    </source>
</evidence>
<evidence type="ECO:0007829" key="23">
    <source>
        <dbReference type="PDB" id="1AXH"/>
    </source>
</evidence>
<protein>
    <recommendedName>
        <fullName evidence="18">Omega-hexatoxin-Hv1a</fullName>
        <shortName evidence="18">Omega-HXTX-Hv1a</shortName>
    </recommendedName>
    <alternativeName>
        <fullName evidence="15">Omega-atracotoxin-Hv1a</fullName>
        <shortName evidence="16">Omega-ACTX-Hv1</shortName>
        <shortName evidence="15">Omega-AcTx-Hv1a</shortName>
        <shortName evidence="16">Omega-atracotoxin-Hv1</shortName>
    </alternativeName>
    <alternativeName>
        <fullName evidence="17">Omega/kappa-atracotoxin-Hv1a</fullName>
        <shortName evidence="17">Omega/kappa-HXTX-Hv1a</shortName>
    </alternativeName>
</protein>
<accession>P56207</accession>